<sequence>MSMTDNVADMLTRIRNAYKSKLINVSFPSSKIKNSILDVLQKEGYIKDYVITQKNNISYTKVALKYSINGEASICEIRRVSKPGKRVYSAIKDLKGYYNNMGIYILSTPYGVMSDREAHIKNVGGEVICKVF</sequence>
<gene>
    <name evidence="1" type="primary">rpsH</name>
    <name type="ordered locus">RT0637</name>
</gene>
<accession>Q68W92</accession>
<evidence type="ECO:0000255" key="1">
    <source>
        <dbReference type="HAMAP-Rule" id="MF_01302"/>
    </source>
</evidence>
<evidence type="ECO:0000305" key="2"/>
<reference key="1">
    <citation type="journal article" date="2004" name="J. Bacteriol.">
        <title>Complete genome sequence of Rickettsia typhi and comparison with sequences of other Rickettsiae.</title>
        <authorList>
            <person name="McLeod M.P."/>
            <person name="Qin X."/>
            <person name="Karpathy S.E."/>
            <person name="Gioia J."/>
            <person name="Highlander S.K."/>
            <person name="Fox G.E."/>
            <person name="McNeill T.Z."/>
            <person name="Jiang H."/>
            <person name="Muzny D."/>
            <person name="Jacob L.S."/>
            <person name="Hawes A.C."/>
            <person name="Sodergren E."/>
            <person name="Gill R."/>
            <person name="Hume J."/>
            <person name="Morgan M."/>
            <person name="Fan G."/>
            <person name="Amin A.G."/>
            <person name="Gibbs R.A."/>
            <person name="Hong C."/>
            <person name="Yu X.-J."/>
            <person name="Walker D.H."/>
            <person name="Weinstock G.M."/>
        </authorList>
    </citation>
    <scope>NUCLEOTIDE SEQUENCE [LARGE SCALE GENOMIC DNA]</scope>
    <source>
        <strain>ATCC VR-144 / Wilmington</strain>
    </source>
</reference>
<proteinExistence type="inferred from homology"/>
<keyword id="KW-0687">Ribonucleoprotein</keyword>
<keyword id="KW-0689">Ribosomal protein</keyword>
<keyword id="KW-0694">RNA-binding</keyword>
<keyword id="KW-0699">rRNA-binding</keyword>
<comment type="function">
    <text evidence="1">One of the primary rRNA binding proteins, it binds directly to 16S rRNA central domain where it helps coordinate assembly of the platform of the 30S subunit.</text>
</comment>
<comment type="subunit">
    <text evidence="1">Part of the 30S ribosomal subunit. Contacts proteins S5 and S12.</text>
</comment>
<comment type="similarity">
    <text evidence="1">Belongs to the universal ribosomal protein uS8 family.</text>
</comment>
<name>RS8_RICTY</name>
<dbReference type="EMBL" id="AE017197">
    <property type="protein sequence ID" value="AAU04100.1"/>
    <property type="molecule type" value="Genomic_DNA"/>
</dbReference>
<dbReference type="RefSeq" id="WP_011191079.1">
    <property type="nucleotide sequence ID" value="NC_006142.1"/>
</dbReference>
<dbReference type="SMR" id="Q68W92"/>
<dbReference type="KEGG" id="rty:RT0637"/>
<dbReference type="eggNOG" id="COG0096">
    <property type="taxonomic scope" value="Bacteria"/>
</dbReference>
<dbReference type="HOGENOM" id="CLU_098428_0_0_5"/>
<dbReference type="OrthoDB" id="9802617at2"/>
<dbReference type="Proteomes" id="UP000000604">
    <property type="component" value="Chromosome"/>
</dbReference>
<dbReference type="GO" id="GO:1990904">
    <property type="term" value="C:ribonucleoprotein complex"/>
    <property type="evidence" value="ECO:0007669"/>
    <property type="project" value="UniProtKB-KW"/>
</dbReference>
<dbReference type="GO" id="GO:0005840">
    <property type="term" value="C:ribosome"/>
    <property type="evidence" value="ECO:0007669"/>
    <property type="project" value="UniProtKB-KW"/>
</dbReference>
<dbReference type="GO" id="GO:0019843">
    <property type="term" value="F:rRNA binding"/>
    <property type="evidence" value="ECO:0007669"/>
    <property type="project" value="UniProtKB-UniRule"/>
</dbReference>
<dbReference type="GO" id="GO:0003735">
    <property type="term" value="F:structural constituent of ribosome"/>
    <property type="evidence" value="ECO:0007669"/>
    <property type="project" value="InterPro"/>
</dbReference>
<dbReference type="GO" id="GO:0006412">
    <property type="term" value="P:translation"/>
    <property type="evidence" value="ECO:0007669"/>
    <property type="project" value="UniProtKB-UniRule"/>
</dbReference>
<dbReference type="FunFam" id="3.30.1370.30:FF:000002">
    <property type="entry name" value="30S ribosomal protein S8"/>
    <property type="match status" value="1"/>
</dbReference>
<dbReference type="FunFam" id="3.30.1490.10:FF:000001">
    <property type="entry name" value="30S ribosomal protein S8"/>
    <property type="match status" value="1"/>
</dbReference>
<dbReference type="Gene3D" id="3.30.1370.30">
    <property type="match status" value="1"/>
</dbReference>
<dbReference type="Gene3D" id="3.30.1490.10">
    <property type="match status" value="1"/>
</dbReference>
<dbReference type="HAMAP" id="MF_01302_B">
    <property type="entry name" value="Ribosomal_uS8_B"/>
    <property type="match status" value="1"/>
</dbReference>
<dbReference type="InterPro" id="IPR000630">
    <property type="entry name" value="Ribosomal_uS8"/>
</dbReference>
<dbReference type="InterPro" id="IPR047863">
    <property type="entry name" value="Ribosomal_uS8_CS"/>
</dbReference>
<dbReference type="InterPro" id="IPR035987">
    <property type="entry name" value="Ribosomal_uS8_sf"/>
</dbReference>
<dbReference type="NCBIfam" id="NF001109">
    <property type="entry name" value="PRK00136.1"/>
    <property type="match status" value="1"/>
</dbReference>
<dbReference type="PANTHER" id="PTHR11758">
    <property type="entry name" value="40S RIBOSOMAL PROTEIN S15A"/>
    <property type="match status" value="1"/>
</dbReference>
<dbReference type="Pfam" id="PF00410">
    <property type="entry name" value="Ribosomal_S8"/>
    <property type="match status" value="1"/>
</dbReference>
<dbReference type="SUPFAM" id="SSF56047">
    <property type="entry name" value="Ribosomal protein S8"/>
    <property type="match status" value="1"/>
</dbReference>
<dbReference type="PROSITE" id="PS00053">
    <property type="entry name" value="RIBOSOMAL_S8"/>
    <property type="match status" value="1"/>
</dbReference>
<feature type="chain" id="PRO_0000126476" description="Small ribosomal subunit protein uS8">
    <location>
        <begin position="1"/>
        <end position="132"/>
    </location>
</feature>
<protein>
    <recommendedName>
        <fullName evidence="1">Small ribosomal subunit protein uS8</fullName>
    </recommendedName>
    <alternativeName>
        <fullName evidence="2">30S ribosomal protein S8</fullName>
    </alternativeName>
</protein>
<organism>
    <name type="scientific">Rickettsia typhi (strain ATCC VR-144 / Wilmington)</name>
    <dbReference type="NCBI Taxonomy" id="257363"/>
    <lineage>
        <taxon>Bacteria</taxon>
        <taxon>Pseudomonadati</taxon>
        <taxon>Pseudomonadota</taxon>
        <taxon>Alphaproteobacteria</taxon>
        <taxon>Rickettsiales</taxon>
        <taxon>Rickettsiaceae</taxon>
        <taxon>Rickettsieae</taxon>
        <taxon>Rickettsia</taxon>
        <taxon>typhus group</taxon>
    </lineage>
</organism>